<keyword id="KW-0256">Endoplasmic reticulum</keyword>
<keyword id="KW-0472">Membrane</keyword>
<keyword id="KW-0812">Transmembrane</keyword>
<keyword id="KW-1133">Transmembrane helix</keyword>
<keyword id="KW-0833">Ubl conjugation pathway</keyword>
<organism>
    <name type="scientific">Osmerus mordax</name>
    <name type="common">Rainbow smelt</name>
    <name type="synonym">Atherina mordax</name>
    <dbReference type="NCBI Taxonomy" id="8014"/>
    <lineage>
        <taxon>Eukaryota</taxon>
        <taxon>Metazoa</taxon>
        <taxon>Chordata</taxon>
        <taxon>Craniata</taxon>
        <taxon>Vertebrata</taxon>
        <taxon>Euteleostomi</taxon>
        <taxon>Actinopterygii</taxon>
        <taxon>Neopterygii</taxon>
        <taxon>Teleostei</taxon>
        <taxon>Stomiati</taxon>
        <taxon>Osmeriformes</taxon>
        <taxon>Osmeridae</taxon>
        <taxon>Osmerus</taxon>
    </lineage>
</organism>
<proteinExistence type="evidence at transcript level"/>
<gene>
    <name evidence="2" type="primary">ddrgk1</name>
</gene>
<protein>
    <recommendedName>
        <fullName evidence="5">DDRGK domain-containing protein 1</fullName>
    </recommendedName>
</protein>
<feature type="chain" id="PRO_0000391853" description="DDRGK domain-containing protein 1">
    <location>
        <begin position="1"/>
        <end position="298"/>
    </location>
</feature>
<feature type="transmembrane region" description="Helical" evidence="3">
    <location>
        <begin position="1"/>
        <end position="21"/>
    </location>
</feature>
<feature type="topological domain" description="Cytoplasmic" evidence="5">
    <location>
        <begin position="22"/>
        <end position="298"/>
    </location>
</feature>
<feature type="domain" description="PCI">
    <location>
        <begin position="215"/>
        <end position="259"/>
    </location>
</feature>
<feature type="region of interest" description="Disordered" evidence="4">
    <location>
        <begin position="71"/>
        <end position="149"/>
    </location>
</feature>
<feature type="short sequence motif" description="UFM1-interacting motif (UFIM)" evidence="2">
    <location>
        <begin position="181"/>
        <end position="195"/>
    </location>
</feature>
<feature type="compositionally biased region" description="Acidic residues" evidence="4">
    <location>
        <begin position="82"/>
        <end position="94"/>
    </location>
</feature>
<feature type="compositionally biased region" description="Basic and acidic residues" evidence="4">
    <location>
        <begin position="110"/>
        <end position="149"/>
    </location>
</feature>
<sequence>MDIVLYFVAVPILIVLIVSAVKVRGKTEEDNHEARQEVAAQVVGRLQAEEGSNRLRRRRNLNRMMANRMANSAYREAADNDSPVEVEEEYEEAEQQSQATGKRGAKKQKKLEEKQAKRAQREAELEEREERKRTQELREEERRKEDKKERILEQRQEEEELRAKEEQEKREEEEYLCLKQSFVVEEQGEADELTEQESQNLLQEFIQHIKDCKVVLLEDLASHFGLRTQDAISRLQDLLSDGSITGVIDDRGKFIFITPEEMNVVAQFIRQRGRVSITDLAQASNSLINLIPEIHNTA</sequence>
<dbReference type="EMBL" id="BT075361">
    <property type="protein sequence ID" value="ACO09785.1"/>
    <property type="molecule type" value="mRNA"/>
</dbReference>
<dbReference type="SMR" id="C1BL82"/>
<dbReference type="GO" id="GO:0005783">
    <property type="term" value="C:endoplasmic reticulum"/>
    <property type="evidence" value="ECO:0000250"/>
    <property type="project" value="UniProtKB"/>
</dbReference>
<dbReference type="GO" id="GO:0005789">
    <property type="term" value="C:endoplasmic reticulum membrane"/>
    <property type="evidence" value="ECO:0000250"/>
    <property type="project" value="UniProtKB"/>
</dbReference>
<dbReference type="GO" id="GO:0044389">
    <property type="term" value="F:ubiquitin-like protein ligase binding"/>
    <property type="evidence" value="ECO:0007669"/>
    <property type="project" value="TreeGrafter"/>
</dbReference>
<dbReference type="GO" id="GO:0141185">
    <property type="term" value="F:UFM1-modified protein reader activity"/>
    <property type="evidence" value="ECO:0000250"/>
    <property type="project" value="UniProtKB"/>
</dbReference>
<dbReference type="GO" id="GO:0051216">
    <property type="term" value="P:cartilage development"/>
    <property type="evidence" value="ECO:0007669"/>
    <property type="project" value="TreeGrafter"/>
</dbReference>
<dbReference type="GO" id="GO:1903895">
    <property type="term" value="P:negative regulation of IRE1-mediated unfolded protein response"/>
    <property type="evidence" value="ECO:0000250"/>
    <property type="project" value="UniProtKB"/>
</dbReference>
<dbReference type="GO" id="GO:1903898">
    <property type="term" value="P:negative regulation of PERK-mediated unfolded protein response"/>
    <property type="evidence" value="ECO:0000250"/>
    <property type="project" value="UniProtKB"/>
</dbReference>
<dbReference type="GO" id="GO:1900100">
    <property type="term" value="P:positive regulation of plasma cell differentiation"/>
    <property type="evidence" value="ECO:0000250"/>
    <property type="project" value="UniProtKB"/>
</dbReference>
<dbReference type="GO" id="GO:0140501">
    <property type="term" value="P:positive regulation of reticulophagy"/>
    <property type="evidence" value="ECO:0000250"/>
    <property type="project" value="UniProtKB"/>
</dbReference>
<dbReference type="GO" id="GO:1990592">
    <property type="term" value="P:protein K69-linked ufmylation"/>
    <property type="evidence" value="ECO:0000250"/>
    <property type="project" value="UniProtKB"/>
</dbReference>
<dbReference type="GO" id="GO:0070972">
    <property type="term" value="P:protein localization to endoplasmic reticulum"/>
    <property type="evidence" value="ECO:0000250"/>
    <property type="project" value="UniProtKB"/>
</dbReference>
<dbReference type="GO" id="GO:0071569">
    <property type="term" value="P:protein ufmylation"/>
    <property type="evidence" value="ECO:0000250"/>
    <property type="project" value="UniProtKB"/>
</dbReference>
<dbReference type="GO" id="GO:0072344">
    <property type="term" value="P:rescue of stalled ribosome"/>
    <property type="evidence" value="ECO:0000250"/>
    <property type="project" value="UniProtKB"/>
</dbReference>
<dbReference type="GO" id="GO:0034976">
    <property type="term" value="P:response to endoplasmic reticulum stress"/>
    <property type="evidence" value="ECO:0000250"/>
    <property type="project" value="UniProtKB"/>
</dbReference>
<dbReference type="GO" id="GO:0061709">
    <property type="term" value="P:reticulophagy"/>
    <property type="evidence" value="ECO:0000250"/>
    <property type="project" value="UniProtKB"/>
</dbReference>
<dbReference type="GO" id="GO:0032790">
    <property type="term" value="P:ribosome disassembly"/>
    <property type="evidence" value="ECO:0000250"/>
    <property type="project" value="UniProtKB"/>
</dbReference>
<dbReference type="FunFam" id="1.10.10.10:FF:000143">
    <property type="entry name" value="DDRGK domain-containing protein 1"/>
    <property type="match status" value="1"/>
</dbReference>
<dbReference type="Gene3D" id="1.10.10.10">
    <property type="entry name" value="Winged helix-like DNA-binding domain superfamily/Winged helix DNA-binding domain"/>
    <property type="match status" value="1"/>
</dbReference>
<dbReference type="InterPro" id="IPR019153">
    <property type="entry name" value="DDRGK_dom-contain"/>
</dbReference>
<dbReference type="InterPro" id="IPR050899">
    <property type="entry name" value="DDRGK_domain-containing"/>
</dbReference>
<dbReference type="InterPro" id="IPR036388">
    <property type="entry name" value="WH-like_DNA-bd_sf"/>
</dbReference>
<dbReference type="InterPro" id="IPR036390">
    <property type="entry name" value="WH_DNA-bd_sf"/>
</dbReference>
<dbReference type="PANTHER" id="PTHR48176">
    <property type="entry name" value="DDRGK DOMAIN-CONTAINING PROTEIN 1"/>
    <property type="match status" value="1"/>
</dbReference>
<dbReference type="PANTHER" id="PTHR48176:SF1">
    <property type="entry name" value="DDRGK DOMAIN-CONTAINING PROTEIN 1"/>
    <property type="match status" value="1"/>
</dbReference>
<dbReference type="Pfam" id="PF09756">
    <property type="entry name" value="DDRGK"/>
    <property type="match status" value="1"/>
</dbReference>
<dbReference type="SMART" id="SM01128">
    <property type="entry name" value="DDRGK"/>
    <property type="match status" value="1"/>
</dbReference>
<dbReference type="SUPFAM" id="SSF46785">
    <property type="entry name" value="Winged helix' DNA-binding domain"/>
    <property type="match status" value="1"/>
</dbReference>
<accession>C1BL82</accession>
<comment type="function">
    <text evidence="1 2">Component of the UFM1 ribosome E3 ligase (UREL) complex, a multiprotein complex that catalyzes ufmylation of endoplasmic reticulum-docked proteins. The UREL complex plays a key role in ribosome recycling by mediating mono-ufmylation of the RPL26/uL24 subunit of the 60S ribosome following ribosome dissociation: ufmylation weakens the junction between post-termination 60S subunits and SEC61 translocons, promoting release and recycling of the large ribosomal subunit from the endoplasmic reticulum membrane. Ufmylation of RPL26/uL24 and subsequent 60S ribosome recycling either take place after normal termination of translation or after ribosome stalling during cotranslational translocation at the endoplasmic reticulum. Within the UREL complex, DDRGK1 tethers the complex to the endoplasmic reticulum membrane to restrict its activity to endoplasmic reticulum-docked ribosomes and acts as an ufmylation 'reader': following RPL26/uL24 ufmylation, DDRGK1 specifically binds to ufmylated RPL26/uL24 via its UFIM motif, resulting in stable association between the 60S ribosome and the UREL complex, followed by dissociation of the 60S ribosome subunit from the endoplasmic reticulum membrane. The UREL complex is also involved in reticulophagy in response to endoplasmic reticulum stress by promoting ufmylation of proteins such as CYB5R3 and RPN1, thereby promoting lysosomal degradation of ufmylated proteins (By similarity). Required for stabilization and ufmylation of ATG9A (By similarity).</text>
</comment>
<comment type="subunit">
    <text evidence="2">Component of the UFM1 ribosome E3 ligase (UREL) complex, composed of ufl1, ddrgk1 and cdk5rap3.</text>
</comment>
<comment type="subcellular location">
    <subcellularLocation>
        <location evidence="2">Endoplasmic reticulum membrane</location>
        <topology evidence="2">Single-pass membrane protein</topology>
    </subcellularLocation>
</comment>
<comment type="domain">
    <text evidence="2">The UFM1-interacting motif (UFIM) specifically recognizes and binds ufmylated RPL26/uL24, resulting in stable association between the 60S ribosome and the UREL complex.</text>
</comment>
<comment type="similarity">
    <text evidence="5">Belongs to the DDRGK1 family.</text>
</comment>
<name>DDRGK_OSMMO</name>
<reference key="1">
    <citation type="submission" date="2009-03" db="EMBL/GenBank/DDBJ databases">
        <title>Osmerus mordax full-length cDNAs.</title>
        <authorList>
            <person name="von Schalburg K."/>
            <person name="Leong J."/>
            <person name="Cooper G."/>
            <person name="Davidson W.S."/>
            <person name="Koop B.F."/>
        </authorList>
    </citation>
    <scope>NUCLEOTIDE SEQUENCE [LARGE SCALE MRNA]</scope>
    <source>
        <tissue>Brain</tissue>
    </source>
</reference>
<evidence type="ECO:0000250" key="1">
    <source>
        <dbReference type="UniProtKB" id="Q80WW9"/>
    </source>
</evidence>
<evidence type="ECO:0000250" key="2">
    <source>
        <dbReference type="UniProtKB" id="Q96HY6"/>
    </source>
</evidence>
<evidence type="ECO:0000255" key="3"/>
<evidence type="ECO:0000256" key="4">
    <source>
        <dbReference type="SAM" id="MobiDB-lite"/>
    </source>
</evidence>
<evidence type="ECO:0000305" key="5"/>